<sequence>MNSQAWIQLAVFLALLMLLAWPLGRWLAAVAEGHLPQGLAPFCRVETALYRAAGIDAAVGMGWKAYALALLAFNALGALAVYALQRLQGGLPLNPQGLPGVGADSSLNTAVSFVSNTNWQGYAGETTMSYLTQMLALGVQNFLSAATGIAVAFALIRGFAARSSSAIGNFWVDVTRITVYVLLPLSLVFAVFLVSQGVIQNVQPYQDVSTLEGAASTPQTLAMGPVASQEAIKMIGTNGGGFFNANSAHPYENPTPLSNFAQMLAIFLIPAGLVFAFGRLVGDVRQGGALLAAMTVMFVLAVVTVTSLEQRGHPQLAALGVDPVASALQAGGNMEGKEARFGIAASALFAAITTAASCGAVNAMHDSFMPLGGAVPLLLIQLGEVVFGGVGSGLYGMLVFAILAVFIAGLMIGRTPEYLGKKIEPYEMKMTAVVILVTPLLALLGTAVALTAPTGPAGMGNPGPHGYTEILYALSSAANNNGSAFAGLSANTPFYNLLLAVAMWFGRFGVIVPVLAIAGSLAAKKRLPVTAGTLPTHGPLFVVLLIGAVLLVGLLNYVPALALGPVVEHLMQAAAR</sequence>
<organism>
    <name type="scientific">Methylibium petroleiphilum (strain ATCC BAA-1232 / LMG 22953 / PM1)</name>
    <dbReference type="NCBI Taxonomy" id="420662"/>
    <lineage>
        <taxon>Bacteria</taxon>
        <taxon>Pseudomonadati</taxon>
        <taxon>Pseudomonadota</taxon>
        <taxon>Betaproteobacteria</taxon>
        <taxon>Burkholderiales</taxon>
        <taxon>Sphaerotilaceae</taxon>
        <taxon>Methylibium</taxon>
    </lineage>
</organism>
<gene>
    <name evidence="1" type="primary">kdpA</name>
    <name type="ordered locus">Mpe_A2507</name>
</gene>
<dbReference type="EMBL" id="CP000555">
    <property type="protein sequence ID" value="ABM95462.1"/>
    <property type="molecule type" value="Genomic_DNA"/>
</dbReference>
<dbReference type="RefSeq" id="WP_011830095.1">
    <property type="nucleotide sequence ID" value="NC_008825.1"/>
</dbReference>
<dbReference type="SMR" id="A2SIS3"/>
<dbReference type="STRING" id="420662.Mpe_A2507"/>
<dbReference type="KEGG" id="mpt:Mpe_A2507"/>
<dbReference type="eggNOG" id="COG2060">
    <property type="taxonomic scope" value="Bacteria"/>
</dbReference>
<dbReference type="HOGENOM" id="CLU_018614_3_0_4"/>
<dbReference type="Proteomes" id="UP000000366">
    <property type="component" value="Chromosome"/>
</dbReference>
<dbReference type="GO" id="GO:0005886">
    <property type="term" value="C:plasma membrane"/>
    <property type="evidence" value="ECO:0007669"/>
    <property type="project" value="UniProtKB-SubCell"/>
</dbReference>
<dbReference type="GO" id="GO:0008556">
    <property type="term" value="F:P-type potassium transmembrane transporter activity"/>
    <property type="evidence" value="ECO:0007669"/>
    <property type="project" value="InterPro"/>
</dbReference>
<dbReference type="GO" id="GO:0030955">
    <property type="term" value="F:potassium ion binding"/>
    <property type="evidence" value="ECO:0007669"/>
    <property type="project" value="UniProtKB-UniRule"/>
</dbReference>
<dbReference type="HAMAP" id="MF_00275">
    <property type="entry name" value="KdpA"/>
    <property type="match status" value="1"/>
</dbReference>
<dbReference type="InterPro" id="IPR004623">
    <property type="entry name" value="KdpA"/>
</dbReference>
<dbReference type="NCBIfam" id="TIGR00680">
    <property type="entry name" value="kdpA"/>
    <property type="match status" value="1"/>
</dbReference>
<dbReference type="PANTHER" id="PTHR30607">
    <property type="entry name" value="POTASSIUM-TRANSPORTING ATPASE A CHAIN"/>
    <property type="match status" value="1"/>
</dbReference>
<dbReference type="PANTHER" id="PTHR30607:SF2">
    <property type="entry name" value="POTASSIUM-TRANSPORTING ATPASE POTASSIUM-BINDING SUBUNIT"/>
    <property type="match status" value="1"/>
</dbReference>
<dbReference type="Pfam" id="PF03814">
    <property type="entry name" value="KdpA"/>
    <property type="match status" value="1"/>
</dbReference>
<dbReference type="PIRSF" id="PIRSF001294">
    <property type="entry name" value="K_ATPaseA"/>
    <property type="match status" value="1"/>
</dbReference>
<evidence type="ECO:0000255" key="1">
    <source>
        <dbReference type="HAMAP-Rule" id="MF_00275"/>
    </source>
</evidence>
<name>KDPA_METPP</name>
<proteinExistence type="inferred from homology"/>
<keyword id="KW-0997">Cell inner membrane</keyword>
<keyword id="KW-1003">Cell membrane</keyword>
<keyword id="KW-0406">Ion transport</keyword>
<keyword id="KW-0472">Membrane</keyword>
<keyword id="KW-0630">Potassium</keyword>
<keyword id="KW-0633">Potassium transport</keyword>
<keyword id="KW-1185">Reference proteome</keyword>
<keyword id="KW-0812">Transmembrane</keyword>
<keyword id="KW-1133">Transmembrane helix</keyword>
<keyword id="KW-0813">Transport</keyword>
<comment type="function">
    <text evidence="1">Part of the high-affinity ATP-driven potassium transport (or Kdp) system, which catalyzes the hydrolysis of ATP coupled with the electrogenic transport of potassium into the cytoplasm. This subunit binds the periplasmic potassium ions and delivers the ions to the membrane domain of KdpB through an intramembrane tunnel.</text>
</comment>
<comment type="subunit">
    <text evidence="1">The system is composed of three essential subunits: KdpA, KdpB and KdpC.</text>
</comment>
<comment type="subcellular location">
    <subcellularLocation>
        <location evidence="1">Cell inner membrane</location>
        <topology evidence="1">Multi-pass membrane protein</topology>
    </subcellularLocation>
</comment>
<comment type="similarity">
    <text evidence="1">Belongs to the KdpA family.</text>
</comment>
<accession>A2SIS3</accession>
<reference key="1">
    <citation type="journal article" date="2007" name="J. Bacteriol.">
        <title>Whole-genome analysis of the methyl tert-butyl ether-degrading beta-proteobacterium Methylibium petroleiphilum PM1.</title>
        <authorList>
            <person name="Kane S.R."/>
            <person name="Chakicherla A.Y."/>
            <person name="Chain P.S.G."/>
            <person name="Schmidt R."/>
            <person name="Shin M.W."/>
            <person name="Legler T.C."/>
            <person name="Scow K.M."/>
            <person name="Larimer F.W."/>
            <person name="Lucas S.M."/>
            <person name="Richardson P.M."/>
            <person name="Hristova K.R."/>
        </authorList>
    </citation>
    <scope>NUCLEOTIDE SEQUENCE [LARGE SCALE GENOMIC DNA]</scope>
    <source>
        <strain>ATCC BAA-1232 / LMG 22953 / PM1</strain>
    </source>
</reference>
<feature type="chain" id="PRO_1000022230" description="Potassium-transporting ATPase potassium-binding subunit">
    <location>
        <begin position="1"/>
        <end position="576"/>
    </location>
</feature>
<feature type="transmembrane region" description="Helical" evidence="1">
    <location>
        <begin position="4"/>
        <end position="24"/>
    </location>
</feature>
<feature type="transmembrane region" description="Helical" evidence="1">
    <location>
        <begin position="65"/>
        <end position="85"/>
    </location>
</feature>
<feature type="transmembrane region" description="Helical" evidence="1">
    <location>
        <begin position="136"/>
        <end position="156"/>
    </location>
</feature>
<feature type="transmembrane region" description="Helical" evidence="1">
    <location>
        <begin position="179"/>
        <end position="199"/>
    </location>
</feature>
<feature type="transmembrane region" description="Helical" evidence="1">
    <location>
        <begin position="257"/>
        <end position="277"/>
    </location>
</feature>
<feature type="transmembrane region" description="Helical" evidence="1">
    <location>
        <begin position="288"/>
        <end position="308"/>
    </location>
</feature>
<feature type="transmembrane region" description="Helical" evidence="1">
    <location>
        <begin position="341"/>
        <end position="361"/>
    </location>
</feature>
<feature type="transmembrane region" description="Helical" evidence="1">
    <location>
        <begin position="371"/>
        <end position="391"/>
    </location>
</feature>
<feature type="transmembrane region" description="Helical" evidence="1">
    <location>
        <begin position="393"/>
        <end position="413"/>
    </location>
</feature>
<feature type="transmembrane region" description="Helical" evidence="1">
    <location>
        <begin position="430"/>
        <end position="450"/>
    </location>
</feature>
<feature type="transmembrane region" description="Helical" evidence="1">
    <location>
        <begin position="497"/>
        <end position="517"/>
    </location>
</feature>
<feature type="transmembrane region" description="Helical" evidence="1">
    <location>
        <begin position="540"/>
        <end position="560"/>
    </location>
</feature>
<protein>
    <recommendedName>
        <fullName evidence="1">Potassium-transporting ATPase potassium-binding subunit</fullName>
    </recommendedName>
    <alternativeName>
        <fullName evidence="1">ATP phosphohydrolase [potassium-transporting] A chain</fullName>
    </alternativeName>
    <alternativeName>
        <fullName evidence="1">Potassium-binding and translocating subunit A</fullName>
    </alternativeName>
    <alternativeName>
        <fullName evidence="1">Potassium-translocating ATPase A chain</fullName>
    </alternativeName>
</protein>